<sequence length="230" mass="24806">MITIALPSKGRMKEDASAVLERAGLKVASVGNDRSYRGRIEGRDDIEVAYLSASEIAREIGAGTVDFGVTGEDLVREGLTNADAQVEFCARLGFGHADVVVAVPEIWLDVDSMADLGDVASEFRARHGRRLAIATKYWRLTQQFFSRQHGIQLYRIVESLGATEGAPAAGQADIIVDITSTGSTLKANHLKILSDGIIVRSEACFVRARKPEHEGDAAIQEIASRIKAAV</sequence>
<gene>
    <name evidence="1" type="primary">hisG</name>
    <name type="ordered locus">Atu0679</name>
    <name type="ORF">AGR_C_1215</name>
</gene>
<evidence type="ECO:0000255" key="1">
    <source>
        <dbReference type="HAMAP-Rule" id="MF_01018"/>
    </source>
</evidence>
<name>HIS1_AGRFC</name>
<feature type="chain" id="PRO_0000151891" description="ATP phosphoribosyltransferase">
    <location>
        <begin position="1"/>
        <end position="230"/>
    </location>
</feature>
<reference key="1">
    <citation type="journal article" date="2001" name="Science">
        <title>The genome of the natural genetic engineer Agrobacterium tumefaciens C58.</title>
        <authorList>
            <person name="Wood D.W."/>
            <person name="Setubal J.C."/>
            <person name="Kaul R."/>
            <person name="Monks D.E."/>
            <person name="Kitajima J.P."/>
            <person name="Okura V.K."/>
            <person name="Zhou Y."/>
            <person name="Chen L."/>
            <person name="Wood G.E."/>
            <person name="Almeida N.F. Jr."/>
            <person name="Woo L."/>
            <person name="Chen Y."/>
            <person name="Paulsen I.T."/>
            <person name="Eisen J.A."/>
            <person name="Karp P.D."/>
            <person name="Bovee D. Sr."/>
            <person name="Chapman P."/>
            <person name="Clendenning J."/>
            <person name="Deatherage G."/>
            <person name="Gillet W."/>
            <person name="Grant C."/>
            <person name="Kutyavin T."/>
            <person name="Levy R."/>
            <person name="Li M.-J."/>
            <person name="McClelland E."/>
            <person name="Palmieri A."/>
            <person name="Raymond C."/>
            <person name="Rouse G."/>
            <person name="Saenphimmachak C."/>
            <person name="Wu Z."/>
            <person name="Romero P."/>
            <person name="Gordon D."/>
            <person name="Zhang S."/>
            <person name="Yoo H."/>
            <person name="Tao Y."/>
            <person name="Biddle P."/>
            <person name="Jung M."/>
            <person name="Krespan W."/>
            <person name="Perry M."/>
            <person name="Gordon-Kamm B."/>
            <person name="Liao L."/>
            <person name="Kim S."/>
            <person name="Hendrick C."/>
            <person name="Zhao Z.-Y."/>
            <person name="Dolan M."/>
            <person name="Chumley F."/>
            <person name="Tingey S.V."/>
            <person name="Tomb J.-F."/>
            <person name="Gordon M.P."/>
            <person name="Olson M.V."/>
            <person name="Nester E.W."/>
        </authorList>
    </citation>
    <scope>NUCLEOTIDE SEQUENCE [LARGE SCALE GENOMIC DNA]</scope>
    <source>
        <strain>C58 / ATCC 33970</strain>
    </source>
</reference>
<reference key="2">
    <citation type="journal article" date="2001" name="Science">
        <title>Genome sequence of the plant pathogen and biotechnology agent Agrobacterium tumefaciens C58.</title>
        <authorList>
            <person name="Goodner B."/>
            <person name="Hinkle G."/>
            <person name="Gattung S."/>
            <person name="Miller N."/>
            <person name="Blanchard M."/>
            <person name="Qurollo B."/>
            <person name="Goldman B.S."/>
            <person name="Cao Y."/>
            <person name="Askenazi M."/>
            <person name="Halling C."/>
            <person name="Mullin L."/>
            <person name="Houmiel K."/>
            <person name="Gordon J."/>
            <person name="Vaudin M."/>
            <person name="Iartchouk O."/>
            <person name="Epp A."/>
            <person name="Liu F."/>
            <person name="Wollam C."/>
            <person name="Allinger M."/>
            <person name="Doughty D."/>
            <person name="Scott C."/>
            <person name="Lappas C."/>
            <person name="Markelz B."/>
            <person name="Flanagan C."/>
            <person name="Crowell C."/>
            <person name="Gurson J."/>
            <person name="Lomo C."/>
            <person name="Sear C."/>
            <person name="Strub G."/>
            <person name="Cielo C."/>
            <person name="Slater S."/>
        </authorList>
    </citation>
    <scope>NUCLEOTIDE SEQUENCE [LARGE SCALE GENOMIC DNA]</scope>
    <source>
        <strain>C58 / ATCC 33970</strain>
    </source>
</reference>
<comment type="function">
    <text evidence="1">Catalyzes the condensation of ATP and 5-phosphoribose 1-diphosphate to form N'-(5'-phosphoribosyl)-ATP (PR-ATP). Has a crucial role in the pathway because the rate of histidine biosynthesis seems to be controlled primarily by regulation of HisG enzymatic activity.</text>
</comment>
<comment type="catalytic activity">
    <reaction evidence="1">
        <text>1-(5-phospho-beta-D-ribosyl)-ATP + diphosphate = 5-phospho-alpha-D-ribose 1-diphosphate + ATP</text>
        <dbReference type="Rhea" id="RHEA:18473"/>
        <dbReference type="ChEBI" id="CHEBI:30616"/>
        <dbReference type="ChEBI" id="CHEBI:33019"/>
        <dbReference type="ChEBI" id="CHEBI:58017"/>
        <dbReference type="ChEBI" id="CHEBI:73183"/>
        <dbReference type="EC" id="2.4.2.17"/>
    </reaction>
</comment>
<comment type="pathway">
    <text evidence="1">Amino-acid biosynthesis; L-histidine biosynthesis; L-histidine from 5-phospho-alpha-D-ribose 1-diphosphate: step 1/9.</text>
</comment>
<comment type="subunit">
    <text evidence="1">Heteromultimer composed of HisG and HisZ subunits.</text>
</comment>
<comment type="subcellular location">
    <subcellularLocation>
        <location evidence="1">Cytoplasm</location>
    </subcellularLocation>
</comment>
<comment type="domain">
    <text>Lacks the C-terminal regulatory region which is replaced by HisZ.</text>
</comment>
<comment type="similarity">
    <text evidence="1">Belongs to the ATP phosphoribosyltransferase family. Short subfamily.</text>
</comment>
<keyword id="KW-0028">Amino-acid biosynthesis</keyword>
<keyword id="KW-0067">ATP-binding</keyword>
<keyword id="KW-0963">Cytoplasm</keyword>
<keyword id="KW-0328">Glycosyltransferase</keyword>
<keyword id="KW-0368">Histidine biosynthesis</keyword>
<keyword id="KW-0547">Nucleotide-binding</keyword>
<keyword id="KW-1185">Reference proteome</keyword>
<keyword id="KW-0808">Transferase</keyword>
<accession>Q8UHK1</accession>
<dbReference type="EC" id="2.4.2.17" evidence="1"/>
<dbReference type="EMBL" id="AE007869">
    <property type="protein sequence ID" value="AAK86488.1"/>
    <property type="molecule type" value="Genomic_DNA"/>
</dbReference>
<dbReference type="PIR" id="AI2659">
    <property type="entry name" value="AI2659"/>
</dbReference>
<dbReference type="PIR" id="G97441">
    <property type="entry name" value="G97441"/>
</dbReference>
<dbReference type="RefSeq" id="NP_353703.1">
    <property type="nucleotide sequence ID" value="NC_003062.2"/>
</dbReference>
<dbReference type="RefSeq" id="WP_010971064.1">
    <property type="nucleotide sequence ID" value="NC_003062.2"/>
</dbReference>
<dbReference type="SMR" id="Q8UHK1"/>
<dbReference type="STRING" id="176299.Atu0679"/>
<dbReference type="EnsemblBacteria" id="AAK86488">
    <property type="protein sequence ID" value="AAK86488"/>
    <property type="gene ID" value="Atu0679"/>
</dbReference>
<dbReference type="GeneID" id="1132717"/>
<dbReference type="KEGG" id="atu:Atu0679"/>
<dbReference type="PATRIC" id="fig|176299.10.peg.675"/>
<dbReference type="eggNOG" id="COG0040">
    <property type="taxonomic scope" value="Bacteria"/>
</dbReference>
<dbReference type="HOGENOM" id="CLU_038115_0_1_5"/>
<dbReference type="OrthoDB" id="9806435at2"/>
<dbReference type="PhylomeDB" id="Q8UHK1"/>
<dbReference type="BioCyc" id="AGRO:ATU0679-MONOMER"/>
<dbReference type="UniPathway" id="UPA00031">
    <property type="reaction ID" value="UER00006"/>
</dbReference>
<dbReference type="Proteomes" id="UP000000813">
    <property type="component" value="Chromosome circular"/>
</dbReference>
<dbReference type="GO" id="GO:0005737">
    <property type="term" value="C:cytoplasm"/>
    <property type="evidence" value="ECO:0007669"/>
    <property type="project" value="UniProtKB-SubCell"/>
</dbReference>
<dbReference type="GO" id="GO:0005524">
    <property type="term" value="F:ATP binding"/>
    <property type="evidence" value="ECO:0007669"/>
    <property type="project" value="UniProtKB-KW"/>
</dbReference>
<dbReference type="GO" id="GO:0003879">
    <property type="term" value="F:ATP phosphoribosyltransferase activity"/>
    <property type="evidence" value="ECO:0007669"/>
    <property type="project" value="UniProtKB-UniRule"/>
</dbReference>
<dbReference type="GO" id="GO:0000105">
    <property type="term" value="P:L-histidine biosynthetic process"/>
    <property type="evidence" value="ECO:0007669"/>
    <property type="project" value="UniProtKB-UniRule"/>
</dbReference>
<dbReference type="CDD" id="cd13593">
    <property type="entry name" value="PBP2_HisGL3"/>
    <property type="match status" value="1"/>
</dbReference>
<dbReference type="Gene3D" id="3.40.190.10">
    <property type="entry name" value="Periplasmic binding protein-like II"/>
    <property type="match status" value="2"/>
</dbReference>
<dbReference type="HAMAP" id="MF_01018">
    <property type="entry name" value="HisG_Short"/>
    <property type="match status" value="1"/>
</dbReference>
<dbReference type="InterPro" id="IPR013820">
    <property type="entry name" value="ATP_PRibTrfase_cat"/>
</dbReference>
<dbReference type="InterPro" id="IPR018198">
    <property type="entry name" value="ATP_PRibTrfase_CS"/>
</dbReference>
<dbReference type="InterPro" id="IPR001348">
    <property type="entry name" value="ATP_PRibTrfase_HisG"/>
</dbReference>
<dbReference type="InterPro" id="IPR024893">
    <property type="entry name" value="ATP_PRibTrfase_HisG_short"/>
</dbReference>
<dbReference type="NCBIfam" id="TIGR00070">
    <property type="entry name" value="hisG"/>
    <property type="match status" value="1"/>
</dbReference>
<dbReference type="PANTHER" id="PTHR21403:SF8">
    <property type="entry name" value="ATP PHOSPHORIBOSYLTRANSFERASE"/>
    <property type="match status" value="1"/>
</dbReference>
<dbReference type="PANTHER" id="PTHR21403">
    <property type="entry name" value="ATP PHOSPHORIBOSYLTRANSFERASE ATP-PRTASE"/>
    <property type="match status" value="1"/>
</dbReference>
<dbReference type="Pfam" id="PF01634">
    <property type="entry name" value="HisG"/>
    <property type="match status" value="1"/>
</dbReference>
<dbReference type="SUPFAM" id="SSF53850">
    <property type="entry name" value="Periplasmic binding protein-like II"/>
    <property type="match status" value="1"/>
</dbReference>
<dbReference type="PROSITE" id="PS01316">
    <property type="entry name" value="ATP_P_PHORIBOSYLTR"/>
    <property type="match status" value="1"/>
</dbReference>
<organism>
    <name type="scientific">Agrobacterium fabrum (strain C58 / ATCC 33970)</name>
    <name type="common">Agrobacterium tumefaciens (strain C58)</name>
    <dbReference type="NCBI Taxonomy" id="176299"/>
    <lineage>
        <taxon>Bacteria</taxon>
        <taxon>Pseudomonadati</taxon>
        <taxon>Pseudomonadota</taxon>
        <taxon>Alphaproteobacteria</taxon>
        <taxon>Hyphomicrobiales</taxon>
        <taxon>Rhizobiaceae</taxon>
        <taxon>Rhizobium/Agrobacterium group</taxon>
        <taxon>Agrobacterium</taxon>
        <taxon>Agrobacterium tumefaciens complex</taxon>
    </lineage>
</organism>
<protein>
    <recommendedName>
        <fullName evidence="1">ATP phosphoribosyltransferase</fullName>
        <shortName evidence="1">ATP-PRT</shortName>
        <shortName evidence="1">ATP-PRTase</shortName>
        <ecNumber evidence="1">2.4.2.17</ecNumber>
    </recommendedName>
</protein>
<proteinExistence type="inferred from homology"/>